<feature type="chain" id="PRO_1000098589" description="Threonine--tRNA ligase">
    <location>
        <begin position="1"/>
        <end position="621"/>
    </location>
</feature>
<feature type="region of interest" description="Editing domain" evidence="1">
    <location>
        <begin position="1"/>
        <end position="137"/>
    </location>
</feature>
<feature type="region of interest" description="Disordered" evidence="2">
    <location>
        <begin position="128"/>
        <end position="150"/>
    </location>
</feature>
<feature type="region of interest" description="Catalytic" evidence="1">
    <location>
        <begin position="202"/>
        <end position="501"/>
    </location>
</feature>
<feature type="region of interest" description="Disordered" evidence="2">
    <location>
        <begin position="598"/>
        <end position="621"/>
    </location>
</feature>
<feature type="compositionally biased region" description="Polar residues" evidence="2">
    <location>
        <begin position="598"/>
        <end position="612"/>
    </location>
</feature>
<feature type="binding site" evidence="1">
    <location>
        <position position="294"/>
    </location>
    <ligand>
        <name>Zn(2+)</name>
        <dbReference type="ChEBI" id="CHEBI:29105"/>
    </ligand>
</feature>
<feature type="binding site" evidence="1">
    <location>
        <position position="346"/>
    </location>
    <ligand>
        <name>Zn(2+)</name>
        <dbReference type="ChEBI" id="CHEBI:29105"/>
    </ligand>
</feature>
<feature type="binding site" evidence="1">
    <location>
        <position position="470"/>
    </location>
    <ligand>
        <name>Zn(2+)</name>
        <dbReference type="ChEBI" id="CHEBI:29105"/>
    </ligand>
</feature>
<organism>
    <name type="scientific">Nitrosopumilus maritimus (strain SCM1)</name>
    <dbReference type="NCBI Taxonomy" id="436308"/>
    <lineage>
        <taxon>Archaea</taxon>
        <taxon>Nitrososphaerota</taxon>
        <taxon>Nitrososphaeria</taxon>
        <taxon>Nitrosopumilales</taxon>
        <taxon>Nitrosopumilaceae</taxon>
        <taxon>Nitrosopumilus</taxon>
    </lineage>
</organism>
<proteinExistence type="inferred from homology"/>
<sequence>MRILQLHCDSIEYTPTKKEIKSAEEIENPQTQRLEEIVVAFVAIEDGDDSSVAKNAISQIKNSMEKIGCKKLLLYPYAHLSSNLAKPSTAMSLLQEMESEASDLEVSHSPFGWTKSYKVQVKGHPLAESSKVVTKDSTTKDDDEDTSDALKGESTIRSYWKIMSPDGTMINIGDYDFSNHKKLEILAKYESAKQRQVDEPPPHVALMKKLAIADYEPASDSGNMRFFPNGRLMKSLIERYVTDRVKEYGGYEVETPIMYDSEHPSMVSYFNRFPARQYNIDSEGKKLFLRFAACFGQFLMANQFQMSYKNLPYKLYELTRYSFRREQSGELVGLRRLRAFTMPDCHAFCKDIPQAVDEIKVRFDLSQSVLKELGIDESDYDMAIRFTEDFYNENKSAIEELVKKHGRPVLVEMWKEKFFYFVLKWEFNFIDNLGKASALSTDQIDVENGDRYGIEFVDENNTAQHPIILHNSPSGAIERIIYALLEKAADDSKKGKKPQLPLWLAPTQVRIIPLKEEFYDFCNNLCDKISAQNVRVDVDDRNESIGKRIREAEKEWIQYILVIGEKEAGSENLSIRDRQTGNVREVSFDDFMNEINEQTSGKPYTGLNQSQHLSKRPQLMV</sequence>
<gene>
    <name evidence="1" type="primary">thrS</name>
    <name type="ordered locus">Nmar_0926</name>
</gene>
<protein>
    <recommendedName>
        <fullName evidence="1">Threonine--tRNA ligase</fullName>
        <ecNumber evidence="1">6.1.1.3</ecNumber>
    </recommendedName>
    <alternativeName>
        <fullName evidence="1">Threonyl-tRNA synthetase</fullName>
        <shortName evidence="1">ThrRS</shortName>
    </alternativeName>
</protein>
<name>SYT_NITMS</name>
<evidence type="ECO:0000255" key="1">
    <source>
        <dbReference type="HAMAP-Rule" id="MF_00184"/>
    </source>
</evidence>
<evidence type="ECO:0000256" key="2">
    <source>
        <dbReference type="SAM" id="MobiDB-lite"/>
    </source>
</evidence>
<comment type="function">
    <text evidence="1">Catalyzes the attachment of threonine to tRNA(Thr) in a two-step reaction: L-threonine is first activated by ATP to form Thr-AMP and then transferred to the acceptor end of tRNA(Thr). Also edits incorrectly charged L-seryl-tRNA(Thr).</text>
</comment>
<comment type="catalytic activity">
    <reaction evidence="1">
        <text>tRNA(Thr) + L-threonine + ATP = L-threonyl-tRNA(Thr) + AMP + diphosphate + H(+)</text>
        <dbReference type="Rhea" id="RHEA:24624"/>
        <dbReference type="Rhea" id="RHEA-COMP:9670"/>
        <dbReference type="Rhea" id="RHEA-COMP:9704"/>
        <dbReference type="ChEBI" id="CHEBI:15378"/>
        <dbReference type="ChEBI" id="CHEBI:30616"/>
        <dbReference type="ChEBI" id="CHEBI:33019"/>
        <dbReference type="ChEBI" id="CHEBI:57926"/>
        <dbReference type="ChEBI" id="CHEBI:78442"/>
        <dbReference type="ChEBI" id="CHEBI:78534"/>
        <dbReference type="ChEBI" id="CHEBI:456215"/>
        <dbReference type="EC" id="6.1.1.3"/>
    </reaction>
</comment>
<comment type="cofactor">
    <cofactor evidence="1">
        <name>Zn(2+)</name>
        <dbReference type="ChEBI" id="CHEBI:29105"/>
    </cofactor>
    <text evidence="1">Binds 1 zinc ion per subunit.</text>
</comment>
<comment type="subunit">
    <text evidence="1">Homodimer.</text>
</comment>
<comment type="subcellular location">
    <subcellularLocation>
        <location evidence="1">Cytoplasm</location>
    </subcellularLocation>
</comment>
<comment type="domain">
    <text evidence="1">The N-terminal domain is an archaea-specific tRNA-editing domain that hydrolyzes incorrectly charged L-seryl-tRNA(Thr). Catalysis of tRNA editing is performed by the charged tRNA itself.</text>
</comment>
<comment type="similarity">
    <text evidence="1">Belongs to the class-II aminoacyl-tRNA synthetase family.</text>
</comment>
<accession>A9A2B1</accession>
<dbReference type="EC" id="6.1.1.3" evidence="1"/>
<dbReference type="EMBL" id="CP000866">
    <property type="protein sequence ID" value="ABX12822.1"/>
    <property type="molecule type" value="Genomic_DNA"/>
</dbReference>
<dbReference type="RefSeq" id="WP_012215309.1">
    <property type="nucleotide sequence ID" value="NC_010085.1"/>
</dbReference>
<dbReference type="SMR" id="A9A2B1"/>
<dbReference type="FunCoup" id="A9A2B1">
    <property type="interactions" value="192"/>
</dbReference>
<dbReference type="STRING" id="436308.Nmar_0926"/>
<dbReference type="EnsemblBacteria" id="ABX12822">
    <property type="protein sequence ID" value="ABX12822"/>
    <property type="gene ID" value="Nmar_0926"/>
</dbReference>
<dbReference type="GeneID" id="5773073"/>
<dbReference type="KEGG" id="nmr:Nmar_0926"/>
<dbReference type="eggNOG" id="arCOG00401">
    <property type="taxonomic scope" value="Archaea"/>
</dbReference>
<dbReference type="HOGENOM" id="CLU_029833_0_0_2"/>
<dbReference type="InParanoid" id="A9A2B1"/>
<dbReference type="OrthoDB" id="372136at2157"/>
<dbReference type="PhylomeDB" id="A9A2B1"/>
<dbReference type="Proteomes" id="UP000000792">
    <property type="component" value="Chromosome"/>
</dbReference>
<dbReference type="GO" id="GO:0005737">
    <property type="term" value="C:cytoplasm"/>
    <property type="evidence" value="ECO:0007669"/>
    <property type="project" value="UniProtKB-SubCell"/>
</dbReference>
<dbReference type="GO" id="GO:0005524">
    <property type="term" value="F:ATP binding"/>
    <property type="evidence" value="ECO:0007669"/>
    <property type="project" value="UniProtKB-UniRule"/>
</dbReference>
<dbReference type="GO" id="GO:0004829">
    <property type="term" value="F:threonine-tRNA ligase activity"/>
    <property type="evidence" value="ECO:0000318"/>
    <property type="project" value="GO_Central"/>
</dbReference>
<dbReference type="GO" id="GO:0000049">
    <property type="term" value="F:tRNA binding"/>
    <property type="evidence" value="ECO:0007669"/>
    <property type="project" value="UniProtKB-KW"/>
</dbReference>
<dbReference type="GO" id="GO:0008270">
    <property type="term" value="F:zinc ion binding"/>
    <property type="evidence" value="ECO:0007669"/>
    <property type="project" value="InterPro"/>
</dbReference>
<dbReference type="GO" id="GO:0006435">
    <property type="term" value="P:threonyl-tRNA aminoacylation"/>
    <property type="evidence" value="ECO:0000318"/>
    <property type="project" value="GO_Central"/>
</dbReference>
<dbReference type="CDD" id="cd00860">
    <property type="entry name" value="ThrRS_anticodon"/>
    <property type="match status" value="1"/>
</dbReference>
<dbReference type="FunFam" id="3.30.930.10:FF:000076">
    <property type="entry name" value="Threonine--tRNA ligase"/>
    <property type="match status" value="1"/>
</dbReference>
<dbReference type="FunFam" id="3.40.50.800:FF:000001">
    <property type="entry name" value="Threonine--tRNA ligase"/>
    <property type="match status" value="1"/>
</dbReference>
<dbReference type="FunFam" id="3.50.80.10:FF:000004">
    <property type="entry name" value="Threonine--tRNA ligase"/>
    <property type="match status" value="1"/>
</dbReference>
<dbReference type="Gene3D" id="3.40.50.800">
    <property type="entry name" value="Anticodon-binding domain"/>
    <property type="match status" value="1"/>
</dbReference>
<dbReference type="Gene3D" id="3.30.930.10">
    <property type="entry name" value="Bira Bifunctional Protein, Domain 2"/>
    <property type="match status" value="1"/>
</dbReference>
<dbReference type="Gene3D" id="3.50.80.10">
    <property type="entry name" value="D-tyrosyl-tRNA(Tyr) deacylase"/>
    <property type="match status" value="1"/>
</dbReference>
<dbReference type="HAMAP" id="MF_00184">
    <property type="entry name" value="Thr_tRNA_synth"/>
    <property type="match status" value="1"/>
</dbReference>
<dbReference type="InterPro" id="IPR002314">
    <property type="entry name" value="aa-tRNA-synt_IIb"/>
</dbReference>
<dbReference type="InterPro" id="IPR006195">
    <property type="entry name" value="aa-tRNA-synth_II"/>
</dbReference>
<dbReference type="InterPro" id="IPR045864">
    <property type="entry name" value="aa-tRNA-synth_II/BPL/LPL"/>
</dbReference>
<dbReference type="InterPro" id="IPR004154">
    <property type="entry name" value="Anticodon-bd"/>
</dbReference>
<dbReference type="InterPro" id="IPR036621">
    <property type="entry name" value="Anticodon-bd_dom_sf"/>
</dbReference>
<dbReference type="InterPro" id="IPR023509">
    <property type="entry name" value="DTD-like_sf"/>
</dbReference>
<dbReference type="InterPro" id="IPR002320">
    <property type="entry name" value="Thr-tRNA-ligase_IIa"/>
</dbReference>
<dbReference type="InterPro" id="IPR015011">
    <property type="entry name" value="Threonyl-tRNA_syn_edit_dom_arc"/>
</dbReference>
<dbReference type="InterPro" id="IPR047246">
    <property type="entry name" value="ThrRS_anticodon"/>
</dbReference>
<dbReference type="NCBIfam" id="NF003068">
    <property type="entry name" value="PRK03991.1"/>
    <property type="match status" value="1"/>
</dbReference>
<dbReference type="NCBIfam" id="TIGR00418">
    <property type="entry name" value="thrS"/>
    <property type="match status" value="1"/>
</dbReference>
<dbReference type="PANTHER" id="PTHR11451:SF44">
    <property type="entry name" value="THREONINE--TRNA LIGASE, CHLOROPLASTIC_MITOCHONDRIAL 2"/>
    <property type="match status" value="1"/>
</dbReference>
<dbReference type="PANTHER" id="PTHR11451">
    <property type="entry name" value="THREONINE-TRNA LIGASE"/>
    <property type="match status" value="1"/>
</dbReference>
<dbReference type="Pfam" id="PF03129">
    <property type="entry name" value="HGTP_anticodon"/>
    <property type="match status" value="1"/>
</dbReference>
<dbReference type="Pfam" id="PF00587">
    <property type="entry name" value="tRNA-synt_2b"/>
    <property type="match status" value="1"/>
</dbReference>
<dbReference type="Pfam" id="PF08915">
    <property type="entry name" value="tRNA-Thr_ED"/>
    <property type="match status" value="1"/>
</dbReference>
<dbReference type="PRINTS" id="PR01047">
    <property type="entry name" value="TRNASYNTHTHR"/>
</dbReference>
<dbReference type="SUPFAM" id="SSF52954">
    <property type="entry name" value="Class II aaRS ABD-related"/>
    <property type="match status" value="1"/>
</dbReference>
<dbReference type="SUPFAM" id="SSF55681">
    <property type="entry name" value="Class II aaRS and biotin synthetases"/>
    <property type="match status" value="1"/>
</dbReference>
<dbReference type="PROSITE" id="PS50862">
    <property type="entry name" value="AA_TRNA_LIGASE_II"/>
    <property type="match status" value="1"/>
</dbReference>
<reference key="1">
    <citation type="journal article" date="2010" name="Proc. Natl. Acad. Sci. U.S.A.">
        <title>Nitrosopumilus maritimus genome reveals unique mechanisms for nitrification and autotrophy in globally distributed marine crenarchaea.</title>
        <authorList>
            <person name="Walker C.B."/>
            <person name="de la Torre J.R."/>
            <person name="Klotz M.G."/>
            <person name="Urakawa H."/>
            <person name="Pinel N."/>
            <person name="Arp D.J."/>
            <person name="Brochier-Armanet C."/>
            <person name="Chain P.S."/>
            <person name="Chan P.P."/>
            <person name="Gollabgir A."/>
            <person name="Hemp J."/>
            <person name="Hugler M."/>
            <person name="Karr E.A."/>
            <person name="Konneke M."/>
            <person name="Shin M."/>
            <person name="Lawton T.J."/>
            <person name="Lowe T."/>
            <person name="Martens-Habbena W."/>
            <person name="Sayavedra-Soto L.A."/>
            <person name="Lang D."/>
            <person name="Sievert S.M."/>
            <person name="Rosenzweig A.C."/>
            <person name="Manning G."/>
            <person name="Stahl D.A."/>
        </authorList>
    </citation>
    <scope>NUCLEOTIDE SEQUENCE [LARGE SCALE GENOMIC DNA]</scope>
    <source>
        <strain>SCM1</strain>
    </source>
</reference>
<keyword id="KW-0030">Aminoacyl-tRNA synthetase</keyword>
<keyword id="KW-0067">ATP-binding</keyword>
<keyword id="KW-0963">Cytoplasm</keyword>
<keyword id="KW-0436">Ligase</keyword>
<keyword id="KW-0479">Metal-binding</keyword>
<keyword id="KW-0547">Nucleotide-binding</keyword>
<keyword id="KW-0648">Protein biosynthesis</keyword>
<keyword id="KW-1185">Reference proteome</keyword>
<keyword id="KW-0694">RNA-binding</keyword>
<keyword id="KW-0820">tRNA-binding</keyword>
<keyword id="KW-0862">Zinc</keyword>